<keyword id="KW-0067">ATP-binding</keyword>
<keyword id="KW-0227">DNA damage</keyword>
<keyword id="KW-0234">DNA repair</keyword>
<keyword id="KW-0238">DNA-binding</keyword>
<keyword id="KW-0378">Hydrolase</keyword>
<keyword id="KW-0479">Metal-binding</keyword>
<keyword id="KW-0547">Nucleotide-binding</keyword>
<keyword id="KW-1185">Reference proteome</keyword>
<keyword id="KW-0346">Stress response</keyword>
<keyword id="KW-0862">Zinc</keyword>
<keyword id="KW-0863">Zinc-finger</keyword>
<feature type="chain" id="PRO_0000187931" description="DNA repair protein RadA">
    <location>
        <begin position="1"/>
        <end position="457"/>
    </location>
</feature>
<feature type="zinc finger region" description="C4-type" evidence="1">
    <location>
        <begin position="12"/>
        <end position="29"/>
    </location>
</feature>
<feature type="region of interest" description="Lon-protease-like" evidence="1">
    <location>
        <begin position="353"/>
        <end position="457"/>
    </location>
</feature>
<feature type="short sequence motif" description="RadA KNRFG motif" evidence="1">
    <location>
        <begin position="254"/>
        <end position="258"/>
    </location>
</feature>
<feature type="binding site" evidence="1">
    <location>
        <begin position="97"/>
        <end position="104"/>
    </location>
    <ligand>
        <name>ATP</name>
        <dbReference type="ChEBI" id="CHEBI:30616"/>
    </ligand>
</feature>
<feature type="sequence conflict" description="In Ref. 2; AAC33293." evidence="2" ref="2">
    <original>E</original>
    <variation>K</variation>
    <location>
        <position position="37"/>
    </location>
</feature>
<feature type="sequence conflict" description="In Ref. 2; AAC33293." evidence="2" ref="2">
    <original>E</original>
    <variation>Q</variation>
    <location>
        <position position="73"/>
    </location>
</feature>
<feature type="sequence conflict" description="In Ref. 2; AAC33293." evidence="2" ref="2">
    <original>N</original>
    <variation>S</variation>
    <location>
        <position position="75"/>
    </location>
</feature>
<feature type="sequence conflict" description="In Ref. 2; AAC33293." evidence="2" ref="2">
    <original>G</original>
    <variation>S</variation>
    <location>
        <position position="86"/>
    </location>
</feature>
<feature type="sequence conflict" description="In Ref. 2; AAC33293." evidence="2" ref="2">
    <original>Q</original>
    <variation>R</variation>
    <location>
        <position position="132"/>
    </location>
</feature>
<feature type="sequence conflict" description="In Ref. 1; AAC44447 and 2; AAC33293." evidence="2" ref="1 2">
    <original>S</original>
    <variation>P</variation>
    <location>
        <position position="181"/>
    </location>
</feature>
<feature type="sequence conflict" description="In Ref. 2; AAC33293." evidence="2" ref="2">
    <original>T</original>
    <variation>S</variation>
    <location>
        <position position="197"/>
    </location>
</feature>
<feature type="sequence conflict" description="In Ref. 2; AAC33293." evidence="2" ref="2">
    <original>PR</original>
    <variation>AP</variation>
    <location>
        <begin position="226"/>
        <end position="227"/>
    </location>
</feature>
<feature type="sequence conflict" description="In Ref. 2; AAC33293." evidence="2" ref="2">
    <original>H</original>
    <variation>P</variation>
    <location>
        <position position="244"/>
    </location>
</feature>
<feature type="sequence conflict" description="In Ref. 2; AAC33293." evidence="2" ref="2">
    <original>R</original>
    <variation>P</variation>
    <location>
        <position position="256"/>
    </location>
</feature>
<feature type="sequence conflict" description="In Ref. 2; AAC33293." evidence="2" ref="2">
    <original>TN</original>
    <variation>PI</variation>
    <location>
        <begin position="260"/>
        <end position="261"/>
    </location>
</feature>
<feature type="sequence conflict" description="In Ref. 2; AAC33293." evidence="2" ref="2">
    <original>G</original>
    <variation>S</variation>
    <location>
        <position position="290"/>
    </location>
</feature>
<feature type="sequence conflict" description="In Ref. 2; AAC33293." evidence="2" ref="2">
    <original>G</original>
    <variation>R</variation>
    <location>
        <position position="293"/>
    </location>
</feature>
<feature type="sequence conflict" description="In Ref. 1; AAC44447." evidence="2" ref="1">
    <original>SMEGTRPVLVEIQALVSPT</original>
    <variation>LWKNSPRPCGNTSACFAN</variation>
    <location>
        <begin position="299"/>
        <end position="317"/>
    </location>
</feature>
<feature type="sequence conflict" description="In Ref. 2; AAC33293." evidence="2" ref="2">
    <original>R</original>
    <variation>C</variation>
    <location>
        <position position="403"/>
    </location>
</feature>
<feature type="sequence conflict" description="In Ref. 1; AAC44447." evidence="2" ref="1">
    <original>R</original>
    <variation>S</variation>
    <location>
        <position position="404"/>
    </location>
</feature>
<feature type="sequence conflict" description="In Ref. 1; AAC44447." evidence="2" ref="1">
    <original>F</original>
    <variation>S</variation>
    <location>
        <position position="424"/>
    </location>
</feature>
<feature type="sequence conflict" description="In Ref. 1; AAC44447." evidence="2" ref="1">
    <location>
        <begin position="452"/>
        <end position="455"/>
    </location>
</feature>
<comment type="function">
    <text evidence="1">DNA-dependent ATPase involved in processing of recombination intermediates, plays a role in repairing DNA breaks. Stimulates the branch migration of RecA-mediated strand transfer reactions, allowing the 3' invading strand to extend heteroduplex DNA faster. Binds ssDNA in the presence of ADP but not other nucleotides, has ATPase activity that is stimulated by ssDNA and various branched DNA structures, but inhibited by SSB. Does not have RecA's homology-searching function.</text>
</comment>
<comment type="domain">
    <text evidence="1">Has a putative N-terminal zinc-finger, a middle region with homology to RecA with ATPase motifs including the RadA KNRFG motif, while the C-terminus is homologous to Lon protease.</text>
</comment>
<comment type="similarity">
    <text evidence="1">Belongs to the RecA family. RadA subfamily.</text>
</comment>
<proteinExistence type="inferred from homology"/>
<gene>
    <name evidence="1" type="primary">radA</name>
    <name type="synonym">sarII</name>
    <name type="synonym">sms</name>
    <name type="ordered locus">lmo0233</name>
</gene>
<dbReference type="EC" id="3.6.4.-" evidence="1"/>
<dbReference type="EMBL" id="U40604">
    <property type="protein sequence ID" value="AAC44447.1"/>
    <property type="molecule type" value="Genomic_DNA"/>
</dbReference>
<dbReference type="EMBL" id="AF083254">
    <property type="protein sequence ID" value="AAC33293.1"/>
    <property type="molecule type" value="Genomic_DNA"/>
</dbReference>
<dbReference type="EMBL" id="AL591974">
    <property type="protein sequence ID" value="CAD00760.1"/>
    <property type="molecule type" value="Genomic_DNA"/>
</dbReference>
<dbReference type="PIR" id="AB1104">
    <property type="entry name" value="AB1104"/>
</dbReference>
<dbReference type="RefSeq" id="NP_463764.1">
    <property type="nucleotide sequence ID" value="NC_003210.1"/>
</dbReference>
<dbReference type="RefSeq" id="WP_010989380.1">
    <property type="nucleotide sequence ID" value="NC_003210.1"/>
</dbReference>
<dbReference type="SMR" id="Q48761"/>
<dbReference type="STRING" id="169963.gene:17592884"/>
<dbReference type="MEROPS" id="S16.A04"/>
<dbReference type="PaxDb" id="169963-lmo0233"/>
<dbReference type="EnsemblBacteria" id="CAD00760">
    <property type="protein sequence ID" value="CAD00760"/>
    <property type="gene ID" value="CAD00760"/>
</dbReference>
<dbReference type="GeneID" id="987204"/>
<dbReference type="KEGG" id="lmo:lmo0233"/>
<dbReference type="PATRIC" id="fig|169963.11.peg.241"/>
<dbReference type="eggNOG" id="COG1066">
    <property type="taxonomic scope" value="Bacteria"/>
</dbReference>
<dbReference type="HOGENOM" id="CLU_018264_0_1_9"/>
<dbReference type="OrthoDB" id="9803906at2"/>
<dbReference type="PhylomeDB" id="Q48761"/>
<dbReference type="BioCyc" id="LMON169963:LMO0233-MONOMER"/>
<dbReference type="Proteomes" id="UP000000817">
    <property type="component" value="Chromosome"/>
</dbReference>
<dbReference type="GO" id="GO:0005524">
    <property type="term" value="F:ATP binding"/>
    <property type="evidence" value="ECO:0007669"/>
    <property type="project" value="UniProtKB-UniRule"/>
</dbReference>
<dbReference type="GO" id="GO:0016887">
    <property type="term" value="F:ATP hydrolysis activity"/>
    <property type="evidence" value="ECO:0007669"/>
    <property type="project" value="InterPro"/>
</dbReference>
<dbReference type="GO" id="GO:0140664">
    <property type="term" value="F:ATP-dependent DNA damage sensor activity"/>
    <property type="evidence" value="ECO:0007669"/>
    <property type="project" value="InterPro"/>
</dbReference>
<dbReference type="GO" id="GO:0003684">
    <property type="term" value="F:damaged DNA binding"/>
    <property type="evidence" value="ECO:0007669"/>
    <property type="project" value="InterPro"/>
</dbReference>
<dbReference type="GO" id="GO:0008270">
    <property type="term" value="F:zinc ion binding"/>
    <property type="evidence" value="ECO:0007669"/>
    <property type="project" value="UniProtKB-KW"/>
</dbReference>
<dbReference type="GO" id="GO:0000725">
    <property type="term" value="P:recombinational repair"/>
    <property type="evidence" value="ECO:0000318"/>
    <property type="project" value="GO_Central"/>
</dbReference>
<dbReference type="CDD" id="cd01121">
    <property type="entry name" value="RadA_SMS_N"/>
    <property type="match status" value="1"/>
</dbReference>
<dbReference type="FunFam" id="3.30.230.10:FF:000031">
    <property type="entry name" value="DNA repair protein RadA"/>
    <property type="match status" value="1"/>
</dbReference>
<dbReference type="FunFam" id="3.40.50.300:FF:000050">
    <property type="entry name" value="DNA repair protein RadA"/>
    <property type="match status" value="1"/>
</dbReference>
<dbReference type="Gene3D" id="3.30.230.10">
    <property type="match status" value="1"/>
</dbReference>
<dbReference type="Gene3D" id="3.40.50.300">
    <property type="entry name" value="P-loop containing nucleotide triphosphate hydrolases"/>
    <property type="match status" value="1"/>
</dbReference>
<dbReference type="HAMAP" id="MF_01498">
    <property type="entry name" value="RadA_bact"/>
    <property type="match status" value="1"/>
</dbReference>
<dbReference type="InterPro" id="IPR003593">
    <property type="entry name" value="AAA+_ATPase"/>
</dbReference>
<dbReference type="InterPro" id="IPR004504">
    <property type="entry name" value="DNA_repair_RadA"/>
</dbReference>
<dbReference type="InterPro" id="IPR027417">
    <property type="entry name" value="P-loop_NTPase"/>
</dbReference>
<dbReference type="InterPro" id="IPR020588">
    <property type="entry name" value="RecA_ATP-bd"/>
</dbReference>
<dbReference type="InterPro" id="IPR020568">
    <property type="entry name" value="Ribosomal_Su5_D2-typ_SF"/>
</dbReference>
<dbReference type="InterPro" id="IPR014721">
    <property type="entry name" value="Ribsml_uS5_D2-typ_fold_subgr"/>
</dbReference>
<dbReference type="InterPro" id="IPR041166">
    <property type="entry name" value="Rubredoxin_2"/>
</dbReference>
<dbReference type="NCBIfam" id="TIGR00416">
    <property type="entry name" value="sms"/>
    <property type="match status" value="1"/>
</dbReference>
<dbReference type="PANTHER" id="PTHR32472">
    <property type="entry name" value="DNA REPAIR PROTEIN RADA"/>
    <property type="match status" value="1"/>
</dbReference>
<dbReference type="PANTHER" id="PTHR32472:SF10">
    <property type="entry name" value="DNA REPAIR PROTEIN RADA-LIKE PROTEIN"/>
    <property type="match status" value="1"/>
</dbReference>
<dbReference type="Pfam" id="PF13481">
    <property type="entry name" value="AAA_25"/>
    <property type="match status" value="1"/>
</dbReference>
<dbReference type="Pfam" id="PF13541">
    <property type="entry name" value="ChlI"/>
    <property type="match status" value="1"/>
</dbReference>
<dbReference type="Pfam" id="PF18073">
    <property type="entry name" value="Zn_ribbon_LapB"/>
    <property type="match status" value="1"/>
</dbReference>
<dbReference type="PRINTS" id="PR01874">
    <property type="entry name" value="DNAREPAIRADA"/>
</dbReference>
<dbReference type="SMART" id="SM00382">
    <property type="entry name" value="AAA"/>
    <property type="match status" value="1"/>
</dbReference>
<dbReference type="SUPFAM" id="SSF52540">
    <property type="entry name" value="P-loop containing nucleoside triphosphate hydrolases"/>
    <property type="match status" value="1"/>
</dbReference>
<dbReference type="SUPFAM" id="SSF54211">
    <property type="entry name" value="Ribosomal protein S5 domain 2-like"/>
    <property type="match status" value="1"/>
</dbReference>
<dbReference type="PROSITE" id="PS50162">
    <property type="entry name" value="RECA_2"/>
    <property type="match status" value="1"/>
</dbReference>
<accession>Q48761</accession>
<accession>O86063</accession>
<protein>
    <recommendedName>
        <fullName evidence="1">DNA repair protein RadA</fullName>
        <ecNumber evidence="1">3.6.4.-</ecNumber>
    </recommendedName>
    <alternativeName>
        <fullName evidence="1">Branch migration protein RadA</fullName>
    </alternativeName>
</protein>
<sequence>MAKAKRTTKFVCQACGYESAKWMGKCPNCNEWNQMVEALEPSKKSRSAFNHTGEPSKATPITQIASETEKRVETNMPELNRVLGGGVVPGSMVLVGGDPGIGKSTLLLQVSAQLTLTNKKVLYISGEESIKQTKLRAERLQVSGDNLYVYAETNLEAVQETIDFVKPDFVVIDSIQTVYHSDVTSAAGSVSQVRECTATLMRIAKMQNIAIFIVGHVTKEGAIAGPRLLEHMVDTVLYFEGERHHAYRILRAVKNRFGSTNEMGIFEMRDVGLVEVANPSEVFLEERLEGASGSTVVASMEGTRPVLVEIQALVSPTMFGNAKRMATGIDYNKVSLIMAVLEKRVGLMLQNQDAYLKAAGGVKLDEPAVDLAVAVSVASSYRDKPTRSTDCFIGELGLTGEIRRVARIEQRVQEAAKLGFKRIFIPKNNEGNWKIPKDVQVVGVETIGEALKKALPD</sequence>
<name>RADA_LISMO</name>
<reference key="1">
    <citation type="journal article" date="1996" name="Mol. Microbiol.">
        <title>Identification of a ClpC ATPase required for stress tolerance and in vivo survival of Listeria monocytogenes.</title>
        <authorList>
            <person name="Rouquette C."/>
            <person name="Ripio M.T."/>
            <person name="Pellegrini E."/>
            <person name="Bolla J.-M."/>
            <person name="Tascon R.I."/>
            <person name="Vazquez-Boland J.A."/>
            <person name="Berche P."/>
        </authorList>
    </citation>
    <scope>NUCLEOTIDE SEQUENCE [GENOMIC DNA]</scope>
    <source>
        <strain>LO28 / Serovar 1/2c</strain>
    </source>
</reference>
<reference key="2">
    <citation type="submission" date="1998-08" db="EMBL/GenBank/DDBJ databases">
        <authorList>
            <person name="Truong T.K."/>
            <person name="Kathariou S."/>
        </authorList>
    </citation>
    <scope>NUCLEOTIDE SEQUENCE [GENOMIC DNA]</scope>
    <source>
        <strain>2175 / Serovar 4b</strain>
    </source>
</reference>
<reference key="3">
    <citation type="journal article" date="2001" name="Science">
        <title>Comparative genomics of Listeria species.</title>
        <authorList>
            <person name="Glaser P."/>
            <person name="Frangeul L."/>
            <person name="Buchrieser C."/>
            <person name="Rusniok C."/>
            <person name="Amend A."/>
            <person name="Baquero F."/>
            <person name="Berche P."/>
            <person name="Bloecker H."/>
            <person name="Brandt P."/>
            <person name="Chakraborty T."/>
            <person name="Charbit A."/>
            <person name="Chetouani F."/>
            <person name="Couve E."/>
            <person name="de Daruvar A."/>
            <person name="Dehoux P."/>
            <person name="Domann E."/>
            <person name="Dominguez-Bernal G."/>
            <person name="Duchaud E."/>
            <person name="Durant L."/>
            <person name="Dussurget O."/>
            <person name="Entian K.-D."/>
            <person name="Fsihi H."/>
            <person name="Garcia-del Portillo F."/>
            <person name="Garrido P."/>
            <person name="Gautier L."/>
            <person name="Goebel W."/>
            <person name="Gomez-Lopez N."/>
            <person name="Hain T."/>
            <person name="Hauf J."/>
            <person name="Jackson D."/>
            <person name="Jones L.-M."/>
            <person name="Kaerst U."/>
            <person name="Kreft J."/>
            <person name="Kuhn M."/>
            <person name="Kunst F."/>
            <person name="Kurapkat G."/>
            <person name="Madueno E."/>
            <person name="Maitournam A."/>
            <person name="Mata Vicente J."/>
            <person name="Ng E."/>
            <person name="Nedjari H."/>
            <person name="Nordsiek G."/>
            <person name="Novella S."/>
            <person name="de Pablos B."/>
            <person name="Perez-Diaz J.-C."/>
            <person name="Purcell R."/>
            <person name="Remmel B."/>
            <person name="Rose M."/>
            <person name="Schlueter T."/>
            <person name="Simoes N."/>
            <person name="Tierrez A."/>
            <person name="Vazquez-Boland J.-A."/>
            <person name="Voss H."/>
            <person name="Wehland J."/>
            <person name="Cossart P."/>
        </authorList>
    </citation>
    <scope>NUCLEOTIDE SEQUENCE [LARGE SCALE GENOMIC DNA]</scope>
    <source>
        <strain>ATCC BAA-679 / EGD-e</strain>
    </source>
</reference>
<evidence type="ECO:0000255" key="1">
    <source>
        <dbReference type="HAMAP-Rule" id="MF_01498"/>
    </source>
</evidence>
<evidence type="ECO:0000305" key="2"/>
<organism>
    <name type="scientific">Listeria monocytogenes serovar 1/2a (strain ATCC BAA-679 / EGD-e)</name>
    <dbReference type="NCBI Taxonomy" id="169963"/>
    <lineage>
        <taxon>Bacteria</taxon>
        <taxon>Bacillati</taxon>
        <taxon>Bacillota</taxon>
        <taxon>Bacilli</taxon>
        <taxon>Bacillales</taxon>
        <taxon>Listeriaceae</taxon>
        <taxon>Listeria</taxon>
    </lineage>
</organism>